<reference key="1">
    <citation type="journal article" date="2007" name="J. Virol.">
        <title>Identification of novel rodent herpesviruses, including the first gammaherpesvirus of Mus musculus.</title>
        <authorList>
            <person name="Ehlers B."/>
            <person name="Kuchler J."/>
            <person name="Yasmum N."/>
            <person name="Dural G."/>
            <person name="Voigt S."/>
            <person name="Schmidt-Chanasit J."/>
            <person name="Jakel T."/>
            <person name="Matuschka F.R."/>
            <person name="Richter D."/>
            <person name="Essbauer S."/>
            <person name="Hughes D.J."/>
            <person name="Summers C."/>
            <person name="Bennett M."/>
            <person name="Stewart J.P."/>
            <person name="Ulrich R.G."/>
        </authorList>
    </citation>
    <scope>NUCLEOTIDE SEQUENCE [GENOMIC DNA]</scope>
</reference>
<reference key="2">
    <citation type="journal article" date="2001" name="J. Gen. Virol.">
        <title>Genetic and ultrastructural characterization of a European isolate of the fatal endotheliotropic elephant herpesvirus.</title>
        <authorList>
            <person name="Ehlers B."/>
            <person name="Burkhardt S."/>
            <person name="Goltz M."/>
            <person name="Bergmann V."/>
            <person name="Ochs A."/>
            <person name="Weiler H."/>
            <person name="Hentschke J."/>
        </authorList>
    </citation>
    <scope>NUCLEOTIDE SEQUENCE [GENOMIC DNA]</scope>
</reference>
<evidence type="ECO:0000255" key="1">
    <source>
        <dbReference type="HAMAP-Rule" id="MF_04016"/>
    </source>
</evidence>
<sequence length="1349" mass="152431">MERDVDADIRLGSELLSKYPLDINVAALIRNYTAGELFDNLRLFFGASPEDYNLQFEAIFGIYCNKLEWIHFLGTALGITSHVVRFPDAEKLSVGKIVFNVTIPRVAVPSGVPNTKNATAVVVKYTERMPIGISFELSFAALEKLRLSFQDATLLDKLINIQAINNTLQCINNSANALQRGLINVVLTKLLHKAPPFFILKYLEEPTGGISSNNSVNRSNAVFSIKSLLPQCLFILNRVENKTSILNILTEMTALVKHSIMVDSSLYTTSGGDEVSGVLVTTSNVLNVITNMFSKLIHKASVVAPVAYGEFIMSKENAVTALAHHAIIADFDQYVQNAQNLTAGPLKKSNFLEMGQDRSTISVQLMQIGDTLVALEQLDKVYRNTMTHNPLDNRLELTFHTVIGLHLPKSISYSTMDAKVSLNSTIRNNVPTSIYFYDKDFTLQKVEFTDCLRTLCHPIFNDGQVCARIFTREIKDGERLCDGHQYVLDNDPPYPNEQHMRNFYGDAPPPMTTNQLKNEYQDLEFFKPSNKCLYTELHPMYDFSDVMIDEAVGQICTPRIMIGNMPQALAPSEFQEIRSMQILEISKNVYPQLYETTVGLATQTLNNPEYPEICYVISVLVHGNRDAFAAAHTLIVACINNAYTTKNMLPFIHDFDMVRLIANNMTDSRILSDAHMHYKRLWSLIGFLKKLVETGGLHGHLVDDPMLCYLNALFDKRLLPPIIHHFPAMKQDMNVKANNRPLNIRGAELRDYDVSNLERMINVGGHVVYRDDIIEAEDLTVSSKIYYYCMLPALTNNHMCGASLLLNQFIPDGFFNSDFIKPEALYAAEQTFEASVMLRRLLEQAGVSTARRPELHEIMTSFFRLLLRMPENARVLEITGPLDHAQRHCMPAFQAVHHSLYDGFLLVAPPLILAEYIQAIPFHKFYSDPVIAQACAPYIREFLTRYPQCNRTDGGFPTPPYFSREYFNWHRTPFFKYSDTCLNTVKSMMTLACMHTKFSPVSTYLQSRARIHPGFAVTLVRTDLFDVERILYSSKSSMSVIIGDPYVYKEKTDIHTTYHITQDISTVDMGMGYSAVTCPAYLRRIVSDMGATLQDLFKVFPVASFGNDELDEWIRTHTGGTHASLFDPNTIDILTFGQVNVNEQPGILIGQKAVVECVVTPVTAPLHYFKIPNNPRGRASCTLAIDPERKQDLFRVIYDHSIPDAQSFLSTANPWGSIWGSIGDVMYNEFHREQIGYNSRIYSPCKQFFSLDDITISNRTLFKITGEYNSRSKSCIDGDNETQYVCVEGTSDMVEKPCIIFQESYPLLSASSEGLLESHIKPPAVRMSETHFQNYLIEEVIPITQILKK</sequence>
<dbReference type="EMBL" id="AF322977">
    <property type="protein sequence ID" value="ABG36579.1"/>
    <property type="molecule type" value="Genomic_DNA"/>
</dbReference>
<dbReference type="SMR" id="Q18LE0"/>
<dbReference type="GO" id="GO:0042025">
    <property type="term" value="C:host cell nucleus"/>
    <property type="evidence" value="ECO:0007669"/>
    <property type="project" value="UniProtKB-SubCell"/>
</dbReference>
<dbReference type="GO" id="GO:0039622">
    <property type="term" value="C:T=16 icosahedral viral capsid"/>
    <property type="evidence" value="ECO:0007669"/>
    <property type="project" value="UniProtKB-KW"/>
</dbReference>
<dbReference type="GO" id="GO:0005198">
    <property type="term" value="F:structural molecule activity"/>
    <property type="evidence" value="ECO:0007669"/>
    <property type="project" value="InterPro"/>
</dbReference>
<dbReference type="HAMAP" id="MF_04016">
    <property type="entry name" value="HSV_MCP"/>
    <property type="match status" value="1"/>
</dbReference>
<dbReference type="InterPro" id="IPR000912">
    <property type="entry name" value="Herpes_MCP"/>
</dbReference>
<dbReference type="InterPro" id="IPR023233">
    <property type="entry name" value="Herpes_MCP_upper_sf"/>
</dbReference>
<dbReference type="Pfam" id="PF03122">
    <property type="entry name" value="Herpes_MCP"/>
    <property type="match status" value="1"/>
</dbReference>
<dbReference type="PRINTS" id="PR00235">
    <property type="entry name" value="HSVCAPSIDMCP"/>
</dbReference>
<dbReference type="SUPFAM" id="SSF103417">
    <property type="entry name" value="Major capsid protein VP5"/>
    <property type="match status" value="1"/>
</dbReference>
<accession>Q18LE0</accession>
<organismHost>
    <name type="scientific">Elephas maximus</name>
    <name type="common">Indian elephant</name>
    <dbReference type="NCBI Taxonomy" id="9783"/>
</organismHost>
<organismHost>
    <name type="scientific">Loxodonta africana</name>
    <name type="common">African elephant</name>
    <dbReference type="NCBI Taxonomy" id="9785"/>
</organismHost>
<organismHost>
    <name type="scientific">Loxodonta cyclotis</name>
    <name type="common">African forest elephant</name>
    <dbReference type="NCBI Taxonomy" id="99490"/>
</organismHost>
<comment type="function">
    <text evidence="1">Self-assembles to form an icosahedral capsid with a T=16 symmetry, about 200 nm in diameter, and consisting of 150 hexons and 12 pentons (total of 162 capsomers). Hexons form the edges and faces of the capsid and are each composed of six MCP molecules. In contrast, one penton is found at each of the 12 vertices. Eleven of the pentons are MCP pentamers, while the last vertex is occupied by the portal complex. The capsid is surrounded by a layer of proteinaceous material designated the tegument which, in turn, is enclosed in an envelope of host cell-derived lipids containing virus-encoded glycoproteins.</text>
</comment>
<comment type="subunit">
    <text evidence="1">Homomultimer. Makes the hexons and eleven out of twelve pentons. Interacts with triplex proteins 1/TRX1 and 2/TRX2; adjacent capsomers are linked together in groups of three by triplexes, heterotrimeric complexes composed of one molecule of TRX1 and two molecules of TRX2. Interacts with scaffold protein; this interaction allows efficient MCP transport to the host nucleus. Interacts with capsid vertex component 2/CVC2. Interacts with the small capsomere-interacting protein/SCP.</text>
</comment>
<comment type="subcellular location">
    <subcellularLocation>
        <location evidence="1">Virion</location>
    </subcellularLocation>
    <subcellularLocation>
        <location evidence="1">Host nucleus</location>
    </subcellularLocation>
</comment>
<comment type="similarity">
    <text evidence="1">Belongs to the herpesviridae major capsid protein family.</text>
</comment>
<name>MCP_ELHVK</name>
<gene>
    <name evidence="1" type="primary">MCP</name>
</gene>
<keyword id="KW-0167">Capsid protein</keyword>
<keyword id="KW-1048">Host nucleus</keyword>
<keyword id="KW-1147">T=16 icosahedral capsid protein</keyword>
<keyword id="KW-0946">Virion</keyword>
<organism>
    <name type="scientific">Elephantid herpesvirus 1 (isolate Asian elephant/Berlin/Kiba/1998)</name>
    <name type="common">EIHV-1</name>
    <name type="synonym">Elephant endotheliotropic herpesvirus</name>
    <dbReference type="NCBI Taxonomy" id="654902"/>
    <lineage>
        <taxon>Viruses</taxon>
        <taxon>Duplodnaviria</taxon>
        <taxon>Heunggongvirae</taxon>
        <taxon>Peploviricota</taxon>
        <taxon>Herviviricetes</taxon>
        <taxon>Herpesvirales</taxon>
        <taxon>Orthoherpesviridae</taxon>
        <taxon>Betaherpesvirinae</taxon>
        <taxon>Proboscivirus</taxon>
        <taxon>Proboscivirus elephantidbeta1</taxon>
        <taxon>Elephantid herpesvirus 1</taxon>
    </lineage>
</organism>
<feature type="chain" id="PRO_0000408157" description="Major capsid protein">
    <location>
        <begin position="1"/>
        <end position="1349"/>
    </location>
</feature>
<proteinExistence type="inferred from homology"/>
<protein>
    <recommendedName>
        <fullName evidence="1">Major capsid protein</fullName>
        <shortName evidence="1">MCP</shortName>
    </recommendedName>
</protein>